<sequence>MPTTALSDQARAKVNLTLRVVGRRVDGYHDLESVVAFADCADRLTLHPGAELSLVTSGPGAQDCGDTADNLVLKATRLLAERVPKLRSGAFVLDKHLPVAAGIGGGSADAAAALRLLARANDLAADDPRVVEAARLTGADVPVCLPSRPCVMTGVGDTLTPLPLPRLPAVMVNPRVPVATKDVFKALGLRAGQLNVGIVDVLKSKGWPAVDASVADWIVAVRRGTNDLEAPALKVEPIVGDVLRALAALPGVRMSRMSGSGATCFALFASDEDTKAGAEVLRAAHPGWWIHAGSLS</sequence>
<name>ISPE_RHOP2</name>
<keyword id="KW-0067">ATP-binding</keyword>
<keyword id="KW-0414">Isoprene biosynthesis</keyword>
<keyword id="KW-0418">Kinase</keyword>
<keyword id="KW-0547">Nucleotide-binding</keyword>
<keyword id="KW-1185">Reference proteome</keyword>
<keyword id="KW-0808">Transferase</keyword>
<reference key="1">
    <citation type="submission" date="2006-01" db="EMBL/GenBank/DDBJ databases">
        <title>Complete sequence of Rhodopseudomonas palustris HaA2.</title>
        <authorList>
            <consortium name="US DOE Joint Genome Institute"/>
            <person name="Copeland A."/>
            <person name="Lucas S."/>
            <person name="Lapidus A."/>
            <person name="Barry K."/>
            <person name="Detter J.C."/>
            <person name="Glavina T."/>
            <person name="Hammon N."/>
            <person name="Israni S."/>
            <person name="Pitluck S."/>
            <person name="Chain P."/>
            <person name="Malfatti S."/>
            <person name="Shin M."/>
            <person name="Vergez L."/>
            <person name="Schmutz J."/>
            <person name="Larimer F."/>
            <person name="Land M."/>
            <person name="Hauser L."/>
            <person name="Pelletier D.A."/>
            <person name="Kyrpides N."/>
            <person name="Anderson I."/>
            <person name="Oda Y."/>
            <person name="Harwood C.S."/>
            <person name="Richardson P."/>
        </authorList>
    </citation>
    <scope>NUCLEOTIDE SEQUENCE [LARGE SCALE GENOMIC DNA]</scope>
    <source>
        <strain>HaA2</strain>
    </source>
</reference>
<protein>
    <recommendedName>
        <fullName evidence="1">4-diphosphocytidyl-2-C-methyl-D-erythritol kinase</fullName>
        <shortName evidence="1">CMK</shortName>
        <ecNumber evidence="1">2.7.1.148</ecNumber>
    </recommendedName>
    <alternativeName>
        <fullName evidence="1">4-(cytidine-5'-diphospho)-2-C-methyl-D-erythritol kinase</fullName>
    </alternativeName>
</protein>
<dbReference type="EC" id="2.7.1.148" evidence="1"/>
<dbReference type="EMBL" id="CP000250">
    <property type="protein sequence ID" value="ABD05796.1"/>
    <property type="molecule type" value="Genomic_DNA"/>
</dbReference>
<dbReference type="SMR" id="Q2J164"/>
<dbReference type="STRING" id="316058.RPB_1086"/>
<dbReference type="KEGG" id="rpb:RPB_1086"/>
<dbReference type="eggNOG" id="COG1947">
    <property type="taxonomic scope" value="Bacteria"/>
</dbReference>
<dbReference type="HOGENOM" id="CLU_053057_1_0_5"/>
<dbReference type="UniPathway" id="UPA00056">
    <property type="reaction ID" value="UER00094"/>
</dbReference>
<dbReference type="Proteomes" id="UP000008809">
    <property type="component" value="Chromosome"/>
</dbReference>
<dbReference type="GO" id="GO:0050515">
    <property type="term" value="F:4-(cytidine 5'-diphospho)-2-C-methyl-D-erythritol kinase activity"/>
    <property type="evidence" value="ECO:0007669"/>
    <property type="project" value="UniProtKB-UniRule"/>
</dbReference>
<dbReference type="GO" id="GO:0005524">
    <property type="term" value="F:ATP binding"/>
    <property type="evidence" value="ECO:0007669"/>
    <property type="project" value="UniProtKB-UniRule"/>
</dbReference>
<dbReference type="GO" id="GO:0019288">
    <property type="term" value="P:isopentenyl diphosphate biosynthetic process, methylerythritol 4-phosphate pathway"/>
    <property type="evidence" value="ECO:0007669"/>
    <property type="project" value="UniProtKB-UniRule"/>
</dbReference>
<dbReference type="GO" id="GO:0016114">
    <property type="term" value="P:terpenoid biosynthetic process"/>
    <property type="evidence" value="ECO:0007669"/>
    <property type="project" value="InterPro"/>
</dbReference>
<dbReference type="Gene3D" id="3.30.230.10">
    <property type="match status" value="1"/>
</dbReference>
<dbReference type="Gene3D" id="3.30.70.890">
    <property type="entry name" value="GHMP kinase, C-terminal domain"/>
    <property type="match status" value="1"/>
</dbReference>
<dbReference type="HAMAP" id="MF_00061">
    <property type="entry name" value="IspE"/>
    <property type="match status" value="1"/>
</dbReference>
<dbReference type="InterPro" id="IPR013750">
    <property type="entry name" value="GHMP_kinase_C_dom"/>
</dbReference>
<dbReference type="InterPro" id="IPR036554">
    <property type="entry name" value="GHMP_kinase_C_sf"/>
</dbReference>
<dbReference type="InterPro" id="IPR006204">
    <property type="entry name" value="GHMP_kinase_N_dom"/>
</dbReference>
<dbReference type="InterPro" id="IPR004424">
    <property type="entry name" value="IspE"/>
</dbReference>
<dbReference type="InterPro" id="IPR020568">
    <property type="entry name" value="Ribosomal_Su5_D2-typ_SF"/>
</dbReference>
<dbReference type="InterPro" id="IPR014721">
    <property type="entry name" value="Ribsml_uS5_D2-typ_fold_subgr"/>
</dbReference>
<dbReference type="NCBIfam" id="TIGR00154">
    <property type="entry name" value="ispE"/>
    <property type="match status" value="1"/>
</dbReference>
<dbReference type="NCBIfam" id="NF011202">
    <property type="entry name" value="PRK14608.1"/>
    <property type="match status" value="1"/>
</dbReference>
<dbReference type="PANTHER" id="PTHR43527">
    <property type="entry name" value="4-DIPHOSPHOCYTIDYL-2-C-METHYL-D-ERYTHRITOL KINASE, CHLOROPLASTIC"/>
    <property type="match status" value="1"/>
</dbReference>
<dbReference type="PANTHER" id="PTHR43527:SF2">
    <property type="entry name" value="4-DIPHOSPHOCYTIDYL-2-C-METHYL-D-ERYTHRITOL KINASE, CHLOROPLASTIC"/>
    <property type="match status" value="1"/>
</dbReference>
<dbReference type="Pfam" id="PF08544">
    <property type="entry name" value="GHMP_kinases_C"/>
    <property type="match status" value="1"/>
</dbReference>
<dbReference type="Pfam" id="PF00288">
    <property type="entry name" value="GHMP_kinases_N"/>
    <property type="match status" value="1"/>
</dbReference>
<dbReference type="PIRSF" id="PIRSF010376">
    <property type="entry name" value="IspE"/>
    <property type="match status" value="1"/>
</dbReference>
<dbReference type="SUPFAM" id="SSF55060">
    <property type="entry name" value="GHMP Kinase, C-terminal domain"/>
    <property type="match status" value="1"/>
</dbReference>
<dbReference type="SUPFAM" id="SSF54211">
    <property type="entry name" value="Ribosomal protein S5 domain 2-like"/>
    <property type="match status" value="1"/>
</dbReference>
<proteinExistence type="inferred from homology"/>
<organism>
    <name type="scientific">Rhodopseudomonas palustris (strain HaA2)</name>
    <dbReference type="NCBI Taxonomy" id="316058"/>
    <lineage>
        <taxon>Bacteria</taxon>
        <taxon>Pseudomonadati</taxon>
        <taxon>Pseudomonadota</taxon>
        <taxon>Alphaproteobacteria</taxon>
        <taxon>Hyphomicrobiales</taxon>
        <taxon>Nitrobacteraceae</taxon>
        <taxon>Rhodopseudomonas</taxon>
    </lineage>
</organism>
<accession>Q2J164</accession>
<feature type="chain" id="PRO_0000335749" description="4-diphosphocytidyl-2-C-methyl-D-erythritol kinase">
    <location>
        <begin position="1"/>
        <end position="296"/>
    </location>
</feature>
<feature type="active site" evidence="1">
    <location>
        <position position="13"/>
    </location>
</feature>
<feature type="active site" evidence="1">
    <location>
        <position position="140"/>
    </location>
</feature>
<feature type="binding site" evidence="1">
    <location>
        <begin position="98"/>
        <end position="108"/>
    </location>
    <ligand>
        <name>ATP</name>
        <dbReference type="ChEBI" id="CHEBI:30616"/>
    </ligand>
</feature>
<gene>
    <name evidence="1" type="primary">ispE</name>
    <name type="ordered locus">RPB_1086</name>
</gene>
<comment type="function">
    <text evidence="1">Catalyzes the phosphorylation of the position 2 hydroxy group of 4-diphosphocytidyl-2C-methyl-D-erythritol.</text>
</comment>
<comment type="catalytic activity">
    <reaction evidence="1">
        <text>4-CDP-2-C-methyl-D-erythritol + ATP = 4-CDP-2-C-methyl-D-erythritol 2-phosphate + ADP + H(+)</text>
        <dbReference type="Rhea" id="RHEA:18437"/>
        <dbReference type="ChEBI" id="CHEBI:15378"/>
        <dbReference type="ChEBI" id="CHEBI:30616"/>
        <dbReference type="ChEBI" id="CHEBI:57823"/>
        <dbReference type="ChEBI" id="CHEBI:57919"/>
        <dbReference type="ChEBI" id="CHEBI:456216"/>
        <dbReference type="EC" id="2.7.1.148"/>
    </reaction>
</comment>
<comment type="pathway">
    <text evidence="1">Isoprenoid biosynthesis; isopentenyl diphosphate biosynthesis via DXP pathway; isopentenyl diphosphate from 1-deoxy-D-xylulose 5-phosphate: step 3/6.</text>
</comment>
<comment type="similarity">
    <text evidence="1">Belongs to the GHMP kinase family. IspE subfamily.</text>
</comment>
<evidence type="ECO:0000255" key="1">
    <source>
        <dbReference type="HAMAP-Rule" id="MF_00061"/>
    </source>
</evidence>